<protein>
    <recommendedName>
        <fullName evidence="7">Nuclear receptor subfamily 5 group A member 2</fullName>
    </recommendedName>
    <alternativeName>
        <fullName evidence="6">FTZ-F1 beta</fullName>
    </alternativeName>
    <alternativeName>
        <fullName evidence="6">Liver receptor homolog 1</fullName>
        <shortName evidence="6">LRH-1</shortName>
    </alternativeName>
</protein>
<dbReference type="EMBL" id="AB012960">
    <property type="protein sequence ID" value="BAA36339.1"/>
    <property type="molecule type" value="mRNA"/>
</dbReference>
<dbReference type="EMBL" id="AB012961">
    <property type="protein sequence ID" value="BAA36340.1"/>
    <property type="molecule type" value="mRNA"/>
</dbReference>
<dbReference type="RefSeq" id="NP_068510.1">
    <molecule id="Q9QWM1-1"/>
    <property type="nucleotide sequence ID" value="NM_021742.1"/>
</dbReference>
<dbReference type="RefSeq" id="XP_006249990.1">
    <molecule id="Q9QWM1-2"/>
    <property type="nucleotide sequence ID" value="XM_006249928.5"/>
</dbReference>
<dbReference type="SMR" id="Q9QWM1"/>
<dbReference type="FunCoup" id="Q9QWM1">
    <property type="interactions" value="1059"/>
</dbReference>
<dbReference type="STRING" id="10116.ENSRNOP00000000812"/>
<dbReference type="PhosphoSitePlus" id="Q9QWM1"/>
<dbReference type="PaxDb" id="10116-ENSRNOP00000000812"/>
<dbReference type="Ensembl" id="ENSRNOT00000000812.6">
    <molecule id="Q9QWM1-1"/>
    <property type="protein sequence ID" value="ENSRNOP00000000812.5"/>
    <property type="gene ID" value="ENSRNOG00000000653.7"/>
</dbReference>
<dbReference type="Ensembl" id="ENSRNOT00000097279.1">
    <molecule id="Q9QWM1-2"/>
    <property type="protein sequence ID" value="ENSRNOP00000096873.1"/>
    <property type="gene ID" value="ENSRNOG00000000653.7"/>
</dbReference>
<dbReference type="GeneID" id="60349"/>
<dbReference type="KEGG" id="rno:60349"/>
<dbReference type="UCSC" id="RGD:68353">
    <molecule id="Q9QWM1-1"/>
    <property type="organism name" value="rat"/>
</dbReference>
<dbReference type="AGR" id="RGD:68353"/>
<dbReference type="CTD" id="2494"/>
<dbReference type="RGD" id="68353">
    <property type="gene designation" value="Nr5a2"/>
</dbReference>
<dbReference type="eggNOG" id="KOG4218">
    <property type="taxonomic scope" value="Eukaryota"/>
</dbReference>
<dbReference type="GeneTree" id="ENSGT00940000153391"/>
<dbReference type="HOGENOM" id="CLU_011437_0_0_1"/>
<dbReference type="InParanoid" id="Q9QWM1"/>
<dbReference type="OMA" id="GHMPRNL"/>
<dbReference type="OrthoDB" id="5984981at2759"/>
<dbReference type="PhylomeDB" id="Q9QWM1"/>
<dbReference type="TreeFam" id="TF350737"/>
<dbReference type="Reactome" id="R-RNO-383280">
    <property type="pathway name" value="Nuclear Receptor transcription pathway"/>
</dbReference>
<dbReference type="Reactome" id="R-RNO-4090294">
    <property type="pathway name" value="SUMOylation of intracellular receptors"/>
</dbReference>
<dbReference type="Reactome" id="R-RNO-9018519">
    <property type="pathway name" value="Estrogen-dependent gene expression"/>
</dbReference>
<dbReference type="PRO" id="PR:Q9QWM1"/>
<dbReference type="Proteomes" id="UP000002494">
    <property type="component" value="Chromosome 13"/>
</dbReference>
<dbReference type="Bgee" id="ENSRNOG00000000653">
    <property type="expression patterns" value="Expressed in ovary and 10 other cell types or tissues"/>
</dbReference>
<dbReference type="GO" id="GO:0005694">
    <property type="term" value="C:chromosome"/>
    <property type="evidence" value="ECO:0007669"/>
    <property type="project" value="UniProtKB-SubCell"/>
</dbReference>
<dbReference type="GO" id="GO:0005737">
    <property type="term" value="C:cytoplasm"/>
    <property type="evidence" value="ECO:0000266"/>
    <property type="project" value="RGD"/>
</dbReference>
<dbReference type="GO" id="GO:0005634">
    <property type="term" value="C:nucleus"/>
    <property type="evidence" value="ECO:0000266"/>
    <property type="project" value="RGD"/>
</dbReference>
<dbReference type="GO" id="GO:0090575">
    <property type="term" value="C:RNA polymerase II transcription regulator complex"/>
    <property type="evidence" value="ECO:0000266"/>
    <property type="project" value="RGD"/>
</dbReference>
<dbReference type="GO" id="GO:0003682">
    <property type="term" value="F:chromatin binding"/>
    <property type="evidence" value="ECO:0000266"/>
    <property type="project" value="RGD"/>
</dbReference>
<dbReference type="GO" id="GO:0003677">
    <property type="term" value="F:DNA binding"/>
    <property type="evidence" value="ECO:0000250"/>
    <property type="project" value="UniProtKB"/>
</dbReference>
<dbReference type="GO" id="GO:0001228">
    <property type="term" value="F:DNA-binding transcription activator activity, RNA polymerase II-specific"/>
    <property type="evidence" value="ECO:0000266"/>
    <property type="project" value="RGD"/>
</dbReference>
<dbReference type="GO" id="GO:0003700">
    <property type="term" value="F:DNA-binding transcription factor activity"/>
    <property type="evidence" value="ECO:0000250"/>
    <property type="project" value="UniProtKB"/>
</dbReference>
<dbReference type="GO" id="GO:0003690">
    <property type="term" value="F:double-stranded DNA binding"/>
    <property type="evidence" value="ECO:0000314"/>
    <property type="project" value="RGD"/>
</dbReference>
<dbReference type="GO" id="GO:0004879">
    <property type="term" value="F:nuclear receptor activity"/>
    <property type="evidence" value="ECO:0000314"/>
    <property type="project" value="RGD"/>
</dbReference>
<dbReference type="GO" id="GO:0005543">
    <property type="term" value="F:phospholipid binding"/>
    <property type="evidence" value="ECO:0000266"/>
    <property type="project" value="RGD"/>
</dbReference>
<dbReference type="GO" id="GO:0000978">
    <property type="term" value="F:RNA polymerase II cis-regulatory region sequence-specific DNA binding"/>
    <property type="evidence" value="ECO:0000266"/>
    <property type="project" value="RGD"/>
</dbReference>
<dbReference type="GO" id="GO:0043565">
    <property type="term" value="F:sequence-specific DNA binding"/>
    <property type="evidence" value="ECO:0000266"/>
    <property type="project" value="RGD"/>
</dbReference>
<dbReference type="GO" id="GO:1990837">
    <property type="term" value="F:sequence-specific double-stranded DNA binding"/>
    <property type="evidence" value="ECO:0000266"/>
    <property type="project" value="RGD"/>
</dbReference>
<dbReference type="GO" id="GO:0000976">
    <property type="term" value="F:transcription cis-regulatory region binding"/>
    <property type="evidence" value="ECO:0000266"/>
    <property type="project" value="RGD"/>
</dbReference>
<dbReference type="GO" id="GO:0001221">
    <property type="term" value="F:transcription coregulator binding"/>
    <property type="evidence" value="ECO:0000266"/>
    <property type="project" value="RGD"/>
</dbReference>
<dbReference type="GO" id="GO:0008270">
    <property type="term" value="F:zinc ion binding"/>
    <property type="evidence" value="ECO:0007669"/>
    <property type="project" value="UniProtKB-KW"/>
</dbReference>
<dbReference type="GO" id="GO:0090425">
    <property type="term" value="P:acinar cell differentiation"/>
    <property type="evidence" value="ECO:0000266"/>
    <property type="project" value="RGD"/>
</dbReference>
<dbReference type="GO" id="GO:0008206">
    <property type="term" value="P:bile acid metabolic process"/>
    <property type="evidence" value="ECO:0000266"/>
    <property type="project" value="RGD"/>
</dbReference>
<dbReference type="GO" id="GO:0097720">
    <property type="term" value="P:calcineurin-mediated signaling"/>
    <property type="evidence" value="ECO:0000315"/>
    <property type="project" value="RGD"/>
</dbReference>
<dbReference type="GO" id="GO:0051216">
    <property type="term" value="P:cartilage development"/>
    <property type="evidence" value="ECO:0007669"/>
    <property type="project" value="Ensembl"/>
</dbReference>
<dbReference type="GO" id="GO:1990830">
    <property type="term" value="P:cellular response to leukemia inhibitory factor"/>
    <property type="evidence" value="ECO:0000266"/>
    <property type="project" value="RGD"/>
</dbReference>
<dbReference type="GO" id="GO:0042632">
    <property type="term" value="P:cholesterol homeostasis"/>
    <property type="evidence" value="ECO:0000266"/>
    <property type="project" value="RGD"/>
</dbReference>
<dbReference type="GO" id="GO:0006338">
    <property type="term" value="P:chromatin remodeling"/>
    <property type="evidence" value="ECO:0000250"/>
    <property type="project" value="UniProtKB"/>
</dbReference>
<dbReference type="GO" id="GO:0040016">
    <property type="term" value="P:embryonic cleavage"/>
    <property type="evidence" value="ECO:0000250"/>
    <property type="project" value="UniProtKB"/>
</dbReference>
<dbReference type="GO" id="GO:0031017">
    <property type="term" value="P:exocrine pancreas development"/>
    <property type="evidence" value="ECO:0000250"/>
    <property type="project" value="UniProtKB"/>
</dbReference>
<dbReference type="GO" id="GO:0009755">
    <property type="term" value="P:hormone-mediated signaling pathway"/>
    <property type="evidence" value="ECO:0000318"/>
    <property type="project" value="GO_Central"/>
</dbReference>
<dbReference type="GO" id="GO:0001826">
    <property type="term" value="P:inner cell mass cell differentiation"/>
    <property type="evidence" value="ECO:0007669"/>
    <property type="project" value="Ensembl"/>
</dbReference>
<dbReference type="GO" id="GO:0140001">
    <property type="term" value="P:morula formation"/>
    <property type="evidence" value="ECO:0000250"/>
    <property type="project" value="UniProtKB"/>
</dbReference>
<dbReference type="GO" id="GO:0032331">
    <property type="term" value="P:negative regulation of chondrocyte differentiation"/>
    <property type="evidence" value="ECO:0000250"/>
    <property type="project" value="UniProtKB"/>
</dbReference>
<dbReference type="GO" id="GO:0050728">
    <property type="term" value="P:negative regulation of inflammatory response"/>
    <property type="evidence" value="ECO:0000250"/>
    <property type="project" value="UniProtKB"/>
</dbReference>
<dbReference type="GO" id="GO:0022008">
    <property type="term" value="P:neurogenesis"/>
    <property type="evidence" value="ECO:0000250"/>
    <property type="project" value="UniProtKB"/>
</dbReference>
<dbReference type="GO" id="GO:0061113">
    <property type="term" value="P:pancreas morphogenesis"/>
    <property type="evidence" value="ECO:0000266"/>
    <property type="project" value="RGD"/>
</dbReference>
<dbReference type="GO" id="GO:0045893">
    <property type="term" value="P:positive regulation of DNA-templated transcription"/>
    <property type="evidence" value="ECO:0000250"/>
    <property type="project" value="UniProtKB"/>
</dbReference>
<dbReference type="GO" id="GO:0031948">
    <property type="term" value="P:positive regulation of glucocorticoid biosynthetic process"/>
    <property type="evidence" value="ECO:0000250"/>
    <property type="project" value="UniProtKB"/>
</dbReference>
<dbReference type="GO" id="GO:2000738">
    <property type="term" value="P:positive regulation of stem cell differentiation"/>
    <property type="evidence" value="ECO:0000250"/>
    <property type="project" value="UniProtKB"/>
</dbReference>
<dbReference type="GO" id="GO:0050870">
    <property type="term" value="P:positive regulation of T cell activation"/>
    <property type="evidence" value="ECO:0000250"/>
    <property type="project" value="UniProtKB"/>
</dbReference>
<dbReference type="GO" id="GO:0002669">
    <property type="term" value="P:positive regulation of T cell anergy"/>
    <property type="evidence" value="ECO:0000250"/>
    <property type="project" value="UniProtKB"/>
</dbReference>
<dbReference type="GO" id="GO:0042102">
    <property type="term" value="P:positive regulation of T cell proliferation"/>
    <property type="evidence" value="ECO:0000250"/>
    <property type="project" value="UniProtKB"/>
</dbReference>
<dbReference type="GO" id="GO:2001051">
    <property type="term" value="P:positive regulation of tendon cell differentiation"/>
    <property type="evidence" value="ECO:0000250"/>
    <property type="project" value="UniProtKB"/>
</dbReference>
<dbReference type="GO" id="GO:0045944">
    <property type="term" value="P:positive regulation of transcription by RNA polymerase II"/>
    <property type="evidence" value="ECO:0000266"/>
    <property type="project" value="RGD"/>
</dbReference>
<dbReference type="GO" id="GO:0045070">
    <property type="term" value="P:positive regulation of viral genome replication"/>
    <property type="evidence" value="ECO:0000266"/>
    <property type="project" value="RGD"/>
</dbReference>
<dbReference type="GO" id="GO:0001545">
    <property type="term" value="P:primary ovarian follicle growth"/>
    <property type="evidence" value="ECO:0000250"/>
    <property type="project" value="UniProtKB"/>
</dbReference>
<dbReference type="GO" id="GO:0042127">
    <property type="term" value="P:regulation of cell population proliferation"/>
    <property type="evidence" value="ECO:0000266"/>
    <property type="project" value="RGD"/>
</dbReference>
<dbReference type="GO" id="GO:0006355">
    <property type="term" value="P:regulation of DNA-templated transcription"/>
    <property type="evidence" value="ECO:0000250"/>
    <property type="project" value="UniProtKB"/>
</dbReference>
<dbReference type="GO" id="GO:0006357">
    <property type="term" value="P:regulation of transcription by RNA polymerase II"/>
    <property type="evidence" value="ECO:0000318"/>
    <property type="project" value="GO_Central"/>
</dbReference>
<dbReference type="GO" id="GO:0060009">
    <property type="term" value="P:Sertoli cell development"/>
    <property type="evidence" value="ECO:0000250"/>
    <property type="project" value="UniProtKB"/>
</dbReference>
<dbReference type="GO" id="GO:0035019">
    <property type="term" value="P:somatic stem cell population maintenance"/>
    <property type="evidence" value="ECO:0000250"/>
    <property type="project" value="UniProtKB"/>
</dbReference>
<dbReference type="GO" id="GO:0007283">
    <property type="term" value="P:spermatogenesis"/>
    <property type="evidence" value="ECO:0000250"/>
    <property type="project" value="UniProtKB"/>
</dbReference>
<dbReference type="GO" id="GO:0009888">
    <property type="term" value="P:tissue development"/>
    <property type="evidence" value="ECO:0000318"/>
    <property type="project" value="GO_Central"/>
</dbReference>
<dbReference type="GO" id="GO:0141064">
    <property type="term" value="P:zygotic genome activation"/>
    <property type="evidence" value="ECO:0000250"/>
    <property type="project" value="UniProtKB"/>
</dbReference>
<dbReference type="CDD" id="cd07167">
    <property type="entry name" value="NR_DBD_Lrh-1_like"/>
    <property type="match status" value="1"/>
</dbReference>
<dbReference type="CDD" id="cd07069">
    <property type="entry name" value="NR_LBD_Lrh-1"/>
    <property type="match status" value="1"/>
</dbReference>
<dbReference type="FunFam" id="3.30.50.10:FF:000006">
    <property type="entry name" value="Nuclear receptor subfamily 5 group A member"/>
    <property type="match status" value="1"/>
</dbReference>
<dbReference type="FunFam" id="1.10.565.10:FF:000011">
    <property type="entry name" value="Nuclear receptor subfamily 5, group A, member 2"/>
    <property type="match status" value="1"/>
</dbReference>
<dbReference type="Gene3D" id="3.30.50.10">
    <property type="entry name" value="Erythroid Transcription Factor GATA-1, subunit A"/>
    <property type="match status" value="1"/>
</dbReference>
<dbReference type="Gene3D" id="1.10.565.10">
    <property type="entry name" value="Retinoid X Receptor"/>
    <property type="match status" value="1"/>
</dbReference>
<dbReference type="InterPro" id="IPR035500">
    <property type="entry name" value="NHR-like_dom_sf"/>
</dbReference>
<dbReference type="InterPro" id="IPR016355">
    <property type="entry name" value="NR5-like"/>
</dbReference>
<dbReference type="InterPro" id="IPR000536">
    <property type="entry name" value="Nucl_hrmn_rcpt_lig-bd"/>
</dbReference>
<dbReference type="InterPro" id="IPR001723">
    <property type="entry name" value="Nuclear_hrmn_rcpt"/>
</dbReference>
<dbReference type="InterPro" id="IPR001628">
    <property type="entry name" value="Znf_hrmn_rcpt"/>
</dbReference>
<dbReference type="InterPro" id="IPR013088">
    <property type="entry name" value="Znf_NHR/GATA"/>
</dbReference>
<dbReference type="PANTHER" id="PTHR24086">
    <property type="entry name" value="NUCLEAR RECEPTOR SUBFAMILY 5 GROUP A"/>
    <property type="match status" value="1"/>
</dbReference>
<dbReference type="PANTHER" id="PTHR24086:SF18">
    <property type="entry name" value="NUCLEAR RECEPTOR SUBFAMILY 5 GROUP A MEMBER 2"/>
    <property type="match status" value="1"/>
</dbReference>
<dbReference type="Pfam" id="PF00104">
    <property type="entry name" value="Hormone_recep"/>
    <property type="match status" value="1"/>
</dbReference>
<dbReference type="Pfam" id="PF00105">
    <property type="entry name" value="zf-C4"/>
    <property type="match status" value="1"/>
</dbReference>
<dbReference type="PIRSF" id="PIRSF002530">
    <property type="entry name" value="Nuc_orph_FTZ-F1"/>
    <property type="match status" value="1"/>
</dbReference>
<dbReference type="PRINTS" id="PR00398">
    <property type="entry name" value="STRDHORMONER"/>
</dbReference>
<dbReference type="PRINTS" id="PR00047">
    <property type="entry name" value="STROIDFINGER"/>
</dbReference>
<dbReference type="SMART" id="SM00430">
    <property type="entry name" value="HOLI"/>
    <property type="match status" value="1"/>
</dbReference>
<dbReference type="SMART" id="SM00399">
    <property type="entry name" value="ZnF_C4"/>
    <property type="match status" value="1"/>
</dbReference>
<dbReference type="SUPFAM" id="SSF57716">
    <property type="entry name" value="Glucocorticoid receptor-like (DNA-binding domain)"/>
    <property type="match status" value="1"/>
</dbReference>
<dbReference type="SUPFAM" id="SSF48508">
    <property type="entry name" value="Nuclear receptor ligand-binding domain"/>
    <property type="match status" value="1"/>
</dbReference>
<dbReference type="PROSITE" id="PS51843">
    <property type="entry name" value="NR_LBD"/>
    <property type="match status" value="1"/>
</dbReference>
<dbReference type="PROSITE" id="PS00031">
    <property type="entry name" value="NUCLEAR_REC_DBD_1"/>
    <property type="match status" value="1"/>
</dbReference>
<dbReference type="PROSITE" id="PS51030">
    <property type="entry name" value="NUCLEAR_REC_DBD_2"/>
    <property type="match status" value="1"/>
</dbReference>
<accession>Q9QWM1</accession>
<accession>Q9QWM0</accession>
<reference key="1">
    <citation type="submission" date="1998-04" db="EMBL/GenBank/DDBJ databases">
        <title>Rat FTZ-F1beta1 (rat homologue 1 of mLRH-1).</title>
        <authorList>
            <person name="Yanase T."/>
            <person name="Ichino I."/>
            <person name="Oba K."/>
        </authorList>
    </citation>
    <scope>NUCLEOTIDE SEQUENCE [MRNA] (ISOFORMS 1 AND 2)</scope>
    <source>
        <tissue>Liver</tissue>
    </source>
</reference>
<organism>
    <name type="scientific">Rattus norvegicus</name>
    <name type="common">Rat</name>
    <dbReference type="NCBI Taxonomy" id="10116"/>
    <lineage>
        <taxon>Eukaryota</taxon>
        <taxon>Metazoa</taxon>
        <taxon>Chordata</taxon>
        <taxon>Craniata</taxon>
        <taxon>Vertebrata</taxon>
        <taxon>Euteleostomi</taxon>
        <taxon>Mammalia</taxon>
        <taxon>Eutheria</taxon>
        <taxon>Euarchontoglires</taxon>
        <taxon>Glires</taxon>
        <taxon>Rodentia</taxon>
        <taxon>Myomorpha</taxon>
        <taxon>Muroidea</taxon>
        <taxon>Muridae</taxon>
        <taxon>Murinae</taxon>
        <taxon>Rattus</taxon>
    </lineage>
</organism>
<comment type="function">
    <text evidence="1 2">Orphan nuclear receptor that binds DNA as a monomer to the 5'-TCAAGGCCA-3' sequence and controls expression of target genes: regulates key biological processes, such as early embryonic development, cholesterol and bile acid synthesis pathways, as well as liver and pancreas morphogenesis. Ligand-binding causes conformational change which causes recruitment of coactivators, promoting target gene activation. The specific ligand is unknown, but specific phospholipids, such as phosphatidylethanolamine, phosphatidylserine, dilauroyl phosphatidylcholine and diundecanoyl phosphatidylcholine can act as ligand in vitro. Acts as a pioneer transcription factor, which unwraps target DNA from histones and elicits local opening of closed chromatin (By similarity). Plays a central role during preimplantation stages of embryonic development. Plays a minor role in zygotic genome activation (ZGA) by regulating a small set of two-cell stage genes. Plays a major role in morula development (2-16 cells embryos) by acting as a master regulator at the 8-cell stage, controlling expression of lineage-specifying transcription factors and genes involved in mitosis, telomere maintenance and DNA repair. Zygotic NR5A2 binds to both closed and open chromatin with other transcription factors, often at SINE B1/Alu repeats DNA elements, promoting chromatin accessibility at nearby regulatory regions (By similarity). Also involved in the epiblast stage of development and embryonic stem cell pluripotency, by promoting expression of POU5F1/OCT4 (By similarity). Regulates other processes later in development, such as formation of connective tissue in lower jaw and middle ear, neural stem cell differentiation, ovarian follicle development and Sertoli cell differentiation. Involved in exocrine pancreas development and acinar cell differentiation (By similarity). Acts as an essential transcriptional regulator of lipid metabolism. Key regulator of cholesterol 7-alpha-hydroxylase gene (CYP7A) expression in liver. Also acts as a negative regulator of inflammation in different organs, such as, liver and pancreas (By similarity). Protects against intestinal inflammation via its ability to regulate glucocorticoid production (By similarity). Plays an anti-inflammatory role during the hepatic acute phase response by acting as a corepressor: inhibits the hepatic acute phase response by preventing dissociation of the N-Cor corepressor complex (By similarity). Acts as a regulator of immunity by promoting lymphocyte T-cell development, proliferation and effector functions. Also involved in resolution of endoplasmic reticulum stress in the liver (By similarity).</text>
</comment>
<comment type="subunit">
    <text evidence="1 2">Monomer; Binds DNA as a monomer. Interacts with nuclear receptor corepressors NR0B1 and NR0B2; repressing NR5A2 nuclear receptor activity. Interacts with nuclear receptor coactivators CTNNB1, PPARGC1A and NCOA2; interaction takes place following ligand-binding and promotes target gene activation. Interacts (when sumoylated) with GPS2; interaction with GPS2 onto hepatic acute phase protein promoters prevents N-Cor corepressor complex dissociation. Interacts with HNF1A (By similarity). Interacts with GRIP1 (By similarity).</text>
</comment>
<comment type="subcellular location">
    <subcellularLocation>
        <location evidence="1">Nucleus</location>
    </subcellularLocation>
    <subcellularLocation>
        <location evidence="1">Chromosome</location>
    </subcellularLocation>
</comment>
<comment type="alternative products">
    <event type="alternative splicing"/>
    <isoform>
        <id>Q9QWM1-1</id>
        <name>1</name>
        <name>FTZ-F1 beta1</name>
        <sequence type="displayed"/>
    </isoform>
    <isoform>
        <id>Q9QWM1-2</id>
        <name>2</name>
        <name>FTZ-F1 beta2</name>
        <sequence type="described" ref="VSP_017915"/>
    </isoform>
</comment>
<comment type="domain">
    <text evidence="1">The C-terminal extension (CTE) loop competes with a DNA minor groove anchor of the nucleosome and releases entry-exit site DNA, thereby promoting opening of closed chromatin.</text>
</comment>
<comment type="PTM">
    <text evidence="1">Sumoylated by SUMO1 at Lys-289 during the hepatic acute phase response, leading to promote interaction with GPS2 and prevent N-Cor corepressor complex dissociation.</text>
</comment>
<comment type="similarity">
    <text evidence="7">Belongs to the nuclear hormone receptor family. NR5 subfamily.</text>
</comment>
<gene>
    <name evidence="8" type="primary">Nr5a2</name>
</gene>
<feature type="chain" id="PRO_0000232606" description="Nuclear receptor subfamily 5 group A member 2">
    <location>
        <begin position="1"/>
        <end position="560"/>
    </location>
</feature>
<feature type="domain" description="NR LBD" evidence="4">
    <location>
        <begin position="319"/>
        <end position="558"/>
    </location>
</feature>
<feature type="DNA-binding region" description="Nuclear receptor" evidence="3">
    <location>
        <begin position="104"/>
        <end position="179"/>
    </location>
</feature>
<feature type="zinc finger region" description="NR C4-type" evidence="3">
    <location>
        <begin position="107"/>
        <end position="127"/>
    </location>
</feature>
<feature type="zinc finger region" description="NR C4-type" evidence="3">
    <location>
        <begin position="143"/>
        <end position="162"/>
    </location>
</feature>
<feature type="region of interest" description="Disordered" evidence="5">
    <location>
        <begin position="17"/>
        <end position="54"/>
    </location>
</feature>
<feature type="region of interest" description="C-terminal extension (CTE)" evidence="1">
    <location>
        <begin position="173"/>
        <end position="188"/>
    </location>
</feature>
<feature type="region of interest" description="AF-2" evidence="4">
    <location>
        <begin position="547"/>
        <end position="558"/>
    </location>
</feature>
<feature type="short sequence motif" description="FTZ-F1 box" evidence="1">
    <location>
        <begin position="189"/>
        <end position="208"/>
    </location>
</feature>
<feature type="compositionally biased region" description="Basic and acidic residues" evidence="5">
    <location>
        <begin position="31"/>
        <end position="48"/>
    </location>
</feature>
<feature type="binding site" evidence="1">
    <location>
        <position position="107"/>
    </location>
    <ligand>
        <name>Zn(2+)</name>
        <dbReference type="ChEBI" id="CHEBI:29105"/>
        <label>1</label>
    </ligand>
</feature>
<feature type="binding site" evidence="1">
    <location>
        <position position="110"/>
    </location>
    <ligand>
        <name>Zn(2+)</name>
        <dbReference type="ChEBI" id="CHEBI:29105"/>
        <label>1</label>
    </ligand>
</feature>
<feature type="binding site" evidence="1">
    <location>
        <position position="124"/>
    </location>
    <ligand>
        <name>Zn(2+)</name>
        <dbReference type="ChEBI" id="CHEBI:29105"/>
        <label>1</label>
    </ligand>
</feature>
<feature type="binding site" evidence="1">
    <location>
        <position position="127"/>
    </location>
    <ligand>
        <name>Zn(2+)</name>
        <dbReference type="ChEBI" id="CHEBI:29105"/>
        <label>1</label>
    </ligand>
</feature>
<feature type="binding site" evidence="1">
    <location>
        <position position="143"/>
    </location>
    <ligand>
        <name>Zn(2+)</name>
        <dbReference type="ChEBI" id="CHEBI:29105"/>
        <label>2</label>
    </ligand>
</feature>
<feature type="binding site" evidence="1">
    <location>
        <position position="149"/>
    </location>
    <ligand>
        <name>Zn(2+)</name>
        <dbReference type="ChEBI" id="CHEBI:29105"/>
        <label>2</label>
    </ligand>
</feature>
<feature type="binding site" evidence="1">
    <location>
        <position position="159"/>
    </location>
    <ligand>
        <name>Zn(2+)</name>
        <dbReference type="ChEBI" id="CHEBI:29105"/>
        <label>2</label>
    </ligand>
</feature>
<feature type="binding site" evidence="1">
    <location>
        <position position="162"/>
    </location>
    <ligand>
        <name>Zn(2+)</name>
        <dbReference type="ChEBI" id="CHEBI:29105"/>
        <label>2</label>
    </ligand>
</feature>
<feature type="binding site" evidence="1">
    <location>
        <position position="535"/>
    </location>
    <ligand>
        <name>a phospholipid derivative</name>
        <dbReference type="ChEBI" id="CHEBI:16247"/>
    </ligand>
</feature>
<feature type="binding site" evidence="1">
    <location>
        <position position="539"/>
    </location>
    <ligand>
        <name>a phospholipid derivative</name>
        <dbReference type="ChEBI" id="CHEBI:16247"/>
    </ligand>
</feature>
<feature type="cross-link" description="Glycyl lysine isopeptide (Lys-Gly) (interchain with G-Cter in SUMO1)" evidence="1">
    <location>
        <position position="289"/>
    </location>
</feature>
<feature type="splice variant" id="VSP_017915" description="In isoform 2." evidence="6">
    <original>APAPGSETPHSPKLEEKHREKR</original>
    <variation>G</variation>
    <location>
        <begin position="22"/>
        <end position="43"/>
    </location>
</feature>
<proteinExistence type="evidence at transcript level"/>
<sequence length="560" mass="63904">MSASSITGDFQDFLKHGLPAIAPAPGSETPHSPKLEEKHREKRAGLPDRHRRPIPARSRLVMLPKVETEASGLVRSHGEQGQMPENMQVSQFKMVNYSYDEDLEELCPVCGDKVSGYHYGLLTCESCKGFFKRTVQNQKRYTCIENQNCQIDKTQRKRCPYCRFKKCIDVGMKLEAVRADRMRGGRNKFGPMYKRDRALKQQKKALIRANGLKLEAMSQVIQAMPSDLTSAIQNIHSASKGLPLSHVALPPTDYDRSPFVTSPISMTMPPHGSLHGYQPYGHFPNRAIKSEYPDPYSSSPESMMGYSYMDGYQTSSPASIPHLILELLKCEPDEPQVQAKIMAYLQQEQNNRNRQEKLSAFGLLCKMADQTLFSIVEWARSSIFFRELKVDDQMKLLQNCWSELLILDHIYRQVAHGKEGTIFLVTGEHVDYSSIISNTEVAFNNLLSLAQELVVRLRSLQFDQREFVCLKFLVLFSSDVKNLENFQLVEGVQEQVNAALLDYTLCNYPQQTEKFGQLLLRLPEIRAISKQAEDYLYYKHVNGDVPYNNLLIEMLHAKRA</sequence>
<name>NR5A2_RAT</name>
<keyword id="KW-0010">Activator</keyword>
<keyword id="KW-0025">Alternative splicing</keyword>
<keyword id="KW-0158">Chromosome</keyword>
<keyword id="KW-0217">Developmental protein</keyword>
<keyword id="KW-0238">DNA-binding</keyword>
<keyword id="KW-1017">Isopeptide bond</keyword>
<keyword id="KW-0446">Lipid-binding</keyword>
<keyword id="KW-0479">Metal-binding</keyword>
<keyword id="KW-0539">Nucleus</keyword>
<keyword id="KW-0675">Receptor</keyword>
<keyword id="KW-1185">Reference proteome</keyword>
<keyword id="KW-0804">Transcription</keyword>
<keyword id="KW-0805">Transcription regulation</keyword>
<keyword id="KW-0832">Ubl conjugation</keyword>
<keyword id="KW-0862">Zinc</keyword>
<keyword id="KW-0863">Zinc-finger</keyword>
<evidence type="ECO:0000250" key="1">
    <source>
        <dbReference type="UniProtKB" id="O00482"/>
    </source>
</evidence>
<evidence type="ECO:0000250" key="2">
    <source>
        <dbReference type="UniProtKB" id="P45448"/>
    </source>
</evidence>
<evidence type="ECO:0000255" key="3">
    <source>
        <dbReference type="PROSITE-ProRule" id="PRU00407"/>
    </source>
</evidence>
<evidence type="ECO:0000255" key="4">
    <source>
        <dbReference type="PROSITE-ProRule" id="PRU01189"/>
    </source>
</evidence>
<evidence type="ECO:0000256" key="5">
    <source>
        <dbReference type="SAM" id="MobiDB-lite"/>
    </source>
</evidence>
<evidence type="ECO:0000303" key="6">
    <source ref="1"/>
</evidence>
<evidence type="ECO:0000305" key="7"/>
<evidence type="ECO:0000312" key="8">
    <source>
        <dbReference type="RGD" id="68353"/>
    </source>
</evidence>